<keyword id="KW-0963">Cytoplasm</keyword>
<keyword id="KW-0342">GTP-binding</keyword>
<keyword id="KW-0378">Hydrolase</keyword>
<keyword id="KW-0547">Nucleotide-binding</keyword>
<keyword id="KW-1185">Reference proteome</keyword>
<keyword id="KW-0687">Ribonucleoprotein</keyword>
<keyword id="KW-0694">RNA-binding</keyword>
<keyword id="KW-0733">Signal recognition particle</keyword>
<comment type="function">
    <text evidence="1">Involved in targeting and insertion of nascent membrane proteins into the cytoplasmic membrane. Binds to the hydrophobic signal sequence of the ribosome-nascent chain (RNC) as it emerges from the ribosomes. The SRP-RNC complex is then targeted to the cytoplasmic membrane where it interacts with the SRP receptor FtsY.</text>
</comment>
<comment type="catalytic activity">
    <reaction evidence="1">
        <text>GTP + H2O = GDP + phosphate + H(+)</text>
        <dbReference type="Rhea" id="RHEA:19669"/>
        <dbReference type="ChEBI" id="CHEBI:15377"/>
        <dbReference type="ChEBI" id="CHEBI:15378"/>
        <dbReference type="ChEBI" id="CHEBI:37565"/>
        <dbReference type="ChEBI" id="CHEBI:43474"/>
        <dbReference type="ChEBI" id="CHEBI:58189"/>
        <dbReference type="EC" id="3.6.5.4"/>
    </reaction>
</comment>
<comment type="subunit">
    <text evidence="1">Part of the signal recognition particle protein translocation system, which is composed of SRP and FtsY.</text>
</comment>
<comment type="subcellular location">
    <subcellularLocation>
        <location evidence="1">Cytoplasm</location>
    </subcellularLocation>
    <text evidence="1">The SRP-RNC complex is targeted to the cytoplasmic membrane.</text>
</comment>
<comment type="domain">
    <text evidence="1">Composed of three domains: the N-terminal N domain, which is responsible for interactions with the ribosome, the central G domain, which binds GTP, and the C-terminal M domain, which binds the RNA and the signal sequence of the RNC.</text>
</comment>
<comment type="similarity">
    <text evidence="1">Belongs to the GTP-binding SRP family. SRP54 subfamily.</text>
</comment>
<comment type="sequence caution" evidence="3">
    <conflict type="erroneous initiation">
        <sequence resource="EMBL-CDS" id="ABB57801"/>
    </conflict>
</comment>
<gene>
    <name evidence="1" type="primary">ffh</name>
    <name type="ordered locus">Synpcc7942_1771</name>
</gene>
<feature type="chain" id="PRO_0000101168" description="Signal recognition particle protein">
    <location>
        <begin position="1"/>
        <end position="485"/>
    </location>
</feature>
<feature type="region of interest" description="Disordered" evidence="2">
    <location>
        <begin position="452"/>
        <end position="485"/>
    </location>
</feature>
<feature type="compositionally biased region" description="Basic residues" evidence="2">
    <location>
        <begin position="471"/>
        <end position="485"/>
    </location>
</feature>
<feature type="binding site" evidence="1">
    <location>
        <begin position="107"/>
        <end position="114"/>
    </location>
    <ligand>
        <name>GTP</name>
        <dbReference type="ChEBI" id="CHEBI:37565"/>
    </ligand>
</feature>
<feature type="binding site" evidence="1">
    <location>
        <begin position="189"/>
        <end position="193"/>
    </location>
    <ligand>
        <name>GTP</name>
        <dbReference type="ChEBI" id="CHEBI:37565"/>
    </ligand>
</feature>
<feature type="binding site" evidence="1">
    <location>
        <begin position="247"/>
        <end position="250"/>
    </location>
    <ligand>
        <name>GTP</name>
        <dbReference type="ChEBI" id="CHEBI:37565"/>
    </ligand>
</feature>
<proteinExistence type="inferred from homology"/>
<accession>Q55311</accession>
<accession>Q31MB8</accession>
<dbReference type="EC" id="3.6.5.4" evidence="1"/>
<dbReference type="EMBL" id="X92071">
    <property type="protein sequence ID" value="CAA63054.1"/>
    <property type="molecule type" value="Genomic_DNA"/>
</dbReference>
<dbReference type="EMBL" id="CP000100">
    <property type="protein sequence ID" value="ABB57801.1"/>
    <property type="status" value="ALT_INIT"/>
    <property type="molecule type" value="Genomic_DNA"/>
</dbReference>
<dbReference type="RefSeq" id="WP_039755651.1">
    <property type="nucleotide sequence ID" value="NZ_JACJTX010000001.1"/>
</dbReference>
<dbReference type="SMR" id="Q55311"/>
<dbReference type="STRING" id="1140.Synpcc7942_1771"/>
<dbReference type="PaxDb" id="1140-Synpcc7942_1771"/>
<dbReference type="GeneID" id="72430642"/>
<dbReference type="KEGG" id="syf:Synpcc7942_1771"/>
<dbReference type="eggNOG" id="COG0541">
    <property type="taxonomic scope" value="Bacteria"/>
</dbReference>
<dbReference type="HOGENOM" id="CLU_009301_6_0_3"/>
<dbReference type="OrthoDB" id="9804720at2"/>
<dbReference type="BioCyc" id="SYNEL:SYNPCC7942_1771-MONOMER"/>
<dbReference type="Proteomes" id="UP000889800">
    <property type="component" value="Chromosome"/>
</dbReference>
<dbReference type="GO" id="GO:0048500">
    <property type="term" value="C:signal recognition particle"/>
    <property type="evidence" value="ECO:0007669"/>
    <property type="project" value="UniProtKB-UniRule"/>
</dbReference>
<dbReference type="GO" id="GO:0008312">
    <property type="term" value="F:7S RNA binding"/>
    <property type="evidence" value="ECO:0007669"/>
    <property type="project" value="InterPro"/>
</dbReference>
<dbReference type="GO" id="GO:0016887">
    <property type="term" value="F:ATP hydrolysis activity"/>
    <property type="evidence" value="ECO:0007669"/>
    <property type="project" value="InterPro"/>
</dbReference>
<dbReference type="GO" id="GO:0005525">
    <property type="term" value="F:GTP binding"/>
    <property type="evidence" value="ECO:0007669"/>
    <property type="project" value="UniProtKB-UniRule"/>
</dbReference>
<dbReference type="GO" id="GO:0003924">
    <property type="term" value="F:GTPase activity"/>
    <property type="evidence" value="ECO:0007669"/>
    <property type="project" value="UniProtKB-UniRule"/>
</dbReference>
<dbReference type="GO" id="GO:0006614">
    <property type="term" value="P:SRP-dependent cotranslational protein targeting to membrane"/>
    <property type="evidence" value="ECO:0007669"/>
    <property type="project" value="InterPro"/>
</dbReference>
<dbReference type="CDD" id="cd18539">
    <property type="entry name" value="SRP_G"/>
    <property type="match status" value="1"/>
</dbReference>
<dbReference type="FunFam" id="3.40.50.300:FF:000022">
    <property type="entry name" value="Signal recognition particle 54 kDa subunit"/>
    <property type="match status" value="1"/>
</dbReference>
<dbReference type="Gene3D" id="3.40.50.300">
    <property type="entry name" value="P-loop containing nucleotide triphosphate hydrolases"/>
    <property type="match status" value="1"/>
</dbReference>
<dbReference type="Gene3D" id="1.20.120.140">
    <property type="entry name" value="Signal recognition particle SRP54, nucleotide-binding domain"/>
    <property type="match status" value="1"/>
</dbReference>
<dbReference type="Gene3D" id="1.10.260.30">
    <property type="entry name" value="Signal recognition particle, SRP54 subunit, M-domain"/>
    <property type="match status" value="1"/>
</dbReference>
<dbReference type="HAMAP" id="MF_00306">
    <property type="entry name" value="SRP54"/>
    <property type="match status" value="1"/>
</dbReference>
<dbReference type="InterPro" id="IPR003593">
    <property type="entry name" value="AAA+_ATPase"/>
</dbReference>
<dbReference type="InterPro" id="IPR027417">
    <property type="entry name" value="P-loop_NTPase"/>
</dbReference>
<dbReference type="InterPro" id="IPR036891">
    <property type="entry name" value="Signal_recog_part_SRP54_M_sf"/>
</dbReference>
<dbReference type="InterPro" id="IPR013822">
    <property type="entry name" value="Signal_recog_particl_SRP54_hlx"/>
</dbReference>
<dbReference type="InterPro" id="IPR004125">
    <property type="entry name" value="Signal_recog_particle_SRP54_M"/>
</dbReference>
<dbReference type="InterPro" id="IPR004780">
    <property type="entry name" value="SRP"/>
</dbReference>
<dbReference type="InterPro" id="IPR022941">
    <property type="entry name" value="SRP54"/>
</dbReference>
<dbReference type="InterPro" id="IPR000897">
    <property type="entry name" value="SRP54_GTPase_dom"/>
</dbReference>
<dbReference type="InterPro" id="IPR042101">
    <property type="entry name" value="SRP54_N_sf"/>
</dbReference>
<dbReference type="NCBIfam" id="TIGR00959">
    <property type="entry name" value="ffh"/>
    <property type="match status" value="1"/>
</dbReference>
<dbReference type="PANTHER" id="PTHR11564">
    <property type="entry name" value="SIGNAL RECOGNITION PARTICLE 54K PROTEIN SRP54"/>
    <property type="match status" value="1"/>
</dbReference>
<dbReference type="PANTHER" id="PTHR11564:SF5">
    <property type="entry name" value="SIGNAL RECOGNITION PARTICLE SUBUNIT SRP54"/>
    <property type="match status" value="1"/>
</dbReference>
<dbReference type="Pfam" id="PF00448">
    <property type="entry name" value="SRP54"/>
    <property type="match status" value="1"/>
</dbReference>
<dbReference type="Pfam" id="PF02881">
    <property type="entry name" value="SRP54_N"/>
    <property type="match status" value="1"/>
</dbReference>
<dbReference type="Pfam" id="PF02978">
    <property type="entry name" value="SRP_SPB"/>
    <property type="match status" value="1"/>
</dbReference>
<dbReference type="SMART" id="SM00382">
    <property type="entry name" value="AAA"/>
    <property type="match status" value="1"/>
</dbReference>
<dbReference type="SMART" id="SM00962">
    <property type="entry name" value="SRP54"/>
    <property type="match status" value="1"/>
</dbReference>
<dbReference type="SMART" id="SM00963">
    <property type="entry name" value="SRP54_N"/>
    <property type="match status" value="1"/>
</dbReference>
<dbReference type="SUPFAM" id="SSF52540">
    <property type="entry name" value="P-loop containing nucleoside triphosphate hydrolases"/>
    <property type="match status" value="1"/>
</dbReference>
<dbReference type="SUPFAM" id="SSF47446">
    <property type="entry name" value="Signal peptide-binding domain"/>
    <property type="match status" value="1"/>
</dbReference>
<dbReference type="PROSITE" id="PS00300">
    <property type="entry name" value="SRP54"/>
    <property type="match status" value="1"/>
</dbReference>
<evidence type="ECO:0000255" key="1">
    <source>
        <dbReference type="HAMAP-Rule" id="MF_00306"/>
    </source>
</evidence>
<evidence type="ECO:0000256" key="2">
    <source>
        <dbReference type="SAM" id="MobiDB-lite"/>
    </source>
</evidence>
<evidence type="ECO:0000305" key="3"/>
<reference key="1">
    <citation type="journal article" date="1996" name="Plant Mol. Biol.">
        <title>The cyanobacterial genome contains a single copy of the ffh gene encoding a homologue of the 54 kDa subunit of signal recognition particle.</title>
        <authorList>
            <person name="Packer J.C.L."/>
            <person name="Howe C.J."/>
        </authorList>
    </citation>
    <scope>NUCLEOTIDE SEQUENCE [GENOMIC DNA]</scope>
</reference>
<reference key="2">
    <citation type="journal article" date="1996" name="Plant Mol. Biol.">
        <authorList>
            <person name="Packer J.C.L."/>
            <person name="Howe C.J."/>
        </authorList>
    </citation>
    <scope>ERRATUM OF PUBMED:8605315</scope>
</reference>
<reference key="3">
    <citation type="submission" date="2005-08" db="EMBL/GenBank/DDBJ databases">
        <title>Complete sequence of chromosome 1 of Synechococcus elongatus PCC 7942.</title>
        <authorList>
            <consortium name="US DOE Joint Genome Institute"/>
            <person name="Copeland A."/>
            <person name="Lucas S."/>
            <person name="Lapidus A."/>
            <person name="Barry K."/>
            <person name="Detter J.C."/>
            <person name="Glavina T."/>
            <person name="Hammon N."/>
            <person name="Israni S."/>
            <person name="Pitluck S."/>
            <person name="Schmutz J."/>
            <person name="Larimer F."/>
            <person name="Land M."/>
            <person name="Kyrpides N."/>
            <person name="Lykidis A."/>
            <person name="Golden S."/>
            <person name="Richardson P."/>
        </authorList>
    </citation>
    <scope>NUCLEOTIDE SEQUENCE [LARGE SCALE GENOMIC DNA]</scope>
    <source>
        <strain>ATCC 33912 / PCC 7942 / FACHB-805</strain>
    </source>
</reference>
<organism>
    <name type="scientific">Synechococcus elongatus (strain ATCC 33912 / PCC 7942 / FACHB-805)</name>
    <name type="common">Anacystis nidulans R2</name>
    <dbReference type="NCBI Taxonomy" id="1140"/>
    <lineage>
        <taxon>Bacteria</taxon>
        <taxon>Bacillati</taxon>
        <taxon>Cyanobacteriota</taxon>
        <taxon>Cyanophyceae</taxon>
        <taxon>Synechococcales</taxon>
        <taxon>Synechococcaceae</taxon>
        <taxon>Synechococcus</taxon>
    </lineage>
</organism>
<protein>
    <recommendedName>
        <fullName evidence="1">Signal recognition particle protein</fullName>
        <ecNumber evidence="1">3.6.5.4</ecNumber>
    </recommendedName>
    <alternativeName>
        <fullName evidence="1">Fifty-four homolog</fullName>
    </alternativeName>
</protein>
<sequence>MFDALAERLEQAWTKLRGQDKISESNVQEALKEVRRALLEADVNLGVVKEFIAQVQEKAVGTQVISGIRPDQQFIKVVYDELVQVMGETHVPLAQAAKAPTVILMAGLQGAGKTTATAKLALHLRKEGRSTLLVATDVYRPAAIDQLITLGKQIDVPVFELGSDANPVEIARQGVEKARQEGIDTVIVDTAGRLQIDTEMMEELAQVKEAIAPHEVLLVVDSMIGQEAASLTRSFHERIGITGAILTKLDGDSRGGAALSIRRVSGQPIKFVGLGEKVEALQPFHPERMASRILGMGDVLTLVEKAQEEIDLADVEKMQEKILAAKFDFTDFLKQMRLLKNMGSLAGFIKLIPGLGGKINDEQLRQGERQLKRVEAMINSMTPQERRDPDLLSNSPSRRHRIAKGCGQTEAEIRQIIQQFQQMRTMMQQMSQGGFPGMGGMGMPGFGGGMPGFGGGAPAPQPGFRGYGPPKKQKKGSKKKKGFGL</sequence>
<name>SRP54_SYNE7</name>